<accession>Q38RY0</accession>
<keyword id="KW-0186">Copper</keyword>
<keyword id="KW-0249">Electron transport</keyword>
<keyword id="KW-0460">Magnesium</keyword>
<keyword id="KW-0472">Membrane</keyword>
<keyword id="KW-0479">Metal-binding</keyword>
<keyword id="KW-0496">Mitochondrion</keyword>
<keyword id="KW-0999">Mitochondrion inner membrane</keyword>
<keyword id="KW-0597">Phosphoprotein</keyword>
<keyword id="KW-0679">Respiratory chain</keyword>
<keyword id="KW-1278">Translocase</keyword>
<keyword id="KW-0812">Transmembrane</keyword>
<keyword id="KW-1133">Transmembrane helix</keyword>
<keyword id="KW-0813">Transport</keyword>
<reference key="1">
    <citation type="journal article" date="2005" name="Mol. Phylogenet. Evol.">
        <title>Multigene phylogeny of the Old World mice, Murinae, reveals distinct geographic lineages and the declining utility of mitochondrial genes compared to nuclear genes.</title>
        <authorList>
            <person name="Steppan S.J."/>
            <person name="Adkins R.M."/>
            <person name="Spinks P.Q."/>
            <person name="Hale C."/>
        </authorList>
    </citation>
    <scope>NUCLEOTIDE SEQUENCE [GENOMIC DNA]</scope>
</reference>
<sequence length="227" mass="25887">MAYPFQLGLQDATSPIMEELTNFHDHTLMIVFLISSLVLYIISLMLTTKLTHTSTMDAQEVETIWTILPAVILILIALPSLRILYMMDEINNPALTVKTMGHQWYWSYEYTDYEDLCFDSYMIPTTDLKPGELRLLEVDNRVVLPMELPIRMLISSEDVLHSWAVPSLGLKTDAIPGRLNQATVTSNRPGLFYGQCSEICGSNHSFMPIVLEMVPLKYFENWSASMI</sequence>
<proteinExistence type="inferred from homology"/>
<gene>
    <name type="primary">MT-CO2</name>
    <name type="synonym">COII</name>
    <name type="synonym">COX2</name>
    <name type="synonym">COXII</name>
    <name type="synonym">MTCO2</name>
</gene>
<protein>
    <recommendedName>
        <fullName>Cytochrome c oxidase subunit 2</fullName>
        <ecNumber>7.1.1.9</ecNumber>
    </recommendedName>
    <alternativeName>
        <fullName>Cytochrome c oxidase polypeptide II</fullName>
    </alternativeName>
</protein>
<name>COX2_OENHY</name>
<geneLocation type="mitochondrion"/>
<evidence type="ECO:0000250" key="1">
    <source>
        <dbReference type="UniProtKB" id="P00403"/>
    </source>
</evidence>
<evidence type="ECO:0000250" key="2">
    <source>
        <dbReference type="UniProtKB" id="P00406"/>
    </source>
</evidence>
<evidence type="ECO:0000250" key="3">
    <source>
        <dbReference type="UniProtKB" id="P00410"/>
    </source>
</evidence>
<evidence type="ECO:0000250" key="4">
    <source>
        <dbReference type="UniProtKB" id="P68530"/>
    </source>
</evidence>
<evidence type="ECO:0000305" key="5"/>
<organism>
    <name type="scientific">Oenomys hypoxanthus</name>
    <name type="common">Rufous-nosed rat</name>
    <dbReference type="NCBI Taxonomy" id="332668"/>
    <lineage>
        <taxon>Eukaryota</taxon>
        <taxon>Metazoa</taxon>
        <taxon>Chordata</taxon>
        <taxon>Craniata</taxon>
        <taxon>Vertebrata</taxon>
        <taxon>Euteleostomi</taxon>
        <taxon>Mammalia</taxon>
        <taxon>Eutheria</taxon>
        <taxon>Euarchontoglires</taxon>
        <taxon>Glires</taxon>
        <taxon>Rodentia</taxon>
        <taxon>Myomorpha</taxon>
        <taxon>Muroidea</taxon>
        <taxon>Muridae</taxon>
        <taxon>Murinae</taxon>
        <taxon>Oenomys</taxon>
    </lineage>
</organism>
<feature type="chain" id="PRO_0000254935" description="Cytochrome c oxidase subunit 2">
    <location>
        <begin position="1"/>
        <end position="227"/>
    </location>
</feature>
<feature type="topological domain" description="Mitochondrial intermembrane" evidence="4">
    <location>
        <begin position="1"/>
        <end position="14"/>
    </location>
</feature>
<feature type="transmembrane region" description="Helical; Name=I" evidence="4">
    <location>
        <begin position="15"/>
        <end position="45"/>
    </location>
</feature>
<feature type="topological domain" description="Mitochondrial matrix" evidence="4">
    <location>
        <begin position="46"/>
        <end position="59"/>
    </location>
</feature>
<feature type="transmembrane region" description="Helical; Name=II" evidence="4">
    <location>
        <begin position="60"/>
        <end position="87"/>
    </location>
</feature>
<feature type="topological domain" description="Mitochondrial intermembrane" evidence="4">
    <location>
        <begin position="88"/>
        <end position="227"/>
    </location>
</feature>
<feature type="binding site" evidence="4">
    <location>
        <position position="161"/>
    </location>
    <ligand>
        <name>Cu cation</name>
        <dbReference type="ChEBI" id="CHEBI:23378"/>
        <label>A1</label>
    </ligand>
</feature>
<feature type="binding site" evidence="4">
    <location>
        <position position="196"/>
    </location>
    <ligand>
        <name>Cu cation</name>
        <dbReference type="ChEBI" id="CHEBI:23378"/>
        <label>A1</label>
    </ligand>
</feature>
<feature type="binding site" evidence="4">
    <location>
        <position position="196"/>
    </location>
    <ligand>
        <name>Cu cation</name>
        <dbReference type="ChEBI" id="CHEBI:23378"/>
        <label>A2</label>
    </ligand>
</feature>
<feature type="binding site" evidence="4">
    <location>
        <position position="198"/>
    </location>
    <ligand>
        <name>Cu cation</name>
        <dbReference type="ChEBI" id="CHEBI:23378"/>
        <label>A2</label>
    </ligand>
</feature>
<feature type="binding site" evidence="4">
    <location>
        <position position="198"/>
    </location>
    <ligand>
        <name>Mg(2+)</name>
        <dbReference type="ChEBI" id="CHEBI:18420"/>
        <note>ligand shared with MT-CO1</note>
    </ligand>
</feature>
<feature type="binding site" evidence="4">
    <location>
        <position position="200"/>
    </location>
    <ligand>
        <name>Cu cation</name>
        <dbReference type="ChEBI" id="CHEBI:23378"/>
        <label>A1</label>
    </ligand>
</feature>
<feature type="binding site" evidence="4">
    <location>
        <position position="200"/>
    </location>
    <ligand>
        <name>Cu cation</name>
        <dbReference type="ChEBI" id="CHEBI:23378"/>
        <label>A2</label>
    </ligand>
</feature>
<feature type="binding site" evidence="4">
    <location>
        <position position="204"/>
    </location>
    <ligand>
        <name>Cu cation</name>
        <dbReference type="ChEBI" id="CHEBI:23378"/>
        <label>A2</label>
    </ligand>
</feature>
<feature type="binding site" evidence="4">
    <location>
        <position position="207"/>
    </location>
    <ligand>
        <name>Cu cation</name>
        <dbReference type="ChEBI" id="CHEBI:23378"/>
        <label>A1</label>
    </ligand>
</feature>
<feature type="modified residue" description="Phosphotyrosine" evidence="2">
    <location>
        <position position="218"/>
    </location>
</feature>
<dbReference type="EC" id="7.1.1.9"/>
<dbReference type="EMBL" id="DQ019110">
    <property type="protein sequence ID" value="ABA28420.1"/>
    <property type="molecule type" value="Genomic_DNA"/>
</dbReference>
<dbReference type="SMR" id="Q38RY0"/>
<dbReference type="GO" id="GO:0005743">
    <property type="term" value="C:mitochondrial inner membrane"/>
    <property type="evidence" value="ECO:0007669"/>
    <property type="project" value="UniProtKB-SubCell"/>
</dbReference>
<dbReference type="GO" id="GO:0045277">
    <property type="term" value="C:respiratory chain complex IV"/>
    <property type="evidence" value="ECO:0000250"/>
    <property type="project" value="UniProtKB"/>
</dbReference>
<dbReference type="GO" id="GO:0005507">
    <property type="term" value="F:copper ion binding"/>
    <property type="evidence" value="ECO:0007669"/>
    <property type="project" value="InterPro"/>
</dbReference>
<dbReference type="GO" id="GO:0004129">
    <property type="term" value="F:cytochrome-c oxidase activity"/>
    <property type="evidence" value="ECO:0007669"/>
    <property type="project" value="UniProtKB-EC"/>
</dbReference>
<dbReference type="GO" id="GO:0042773">
    <property type="term" value="P:ATP synthesis coupled electron transport"/>
    <property type="evidence" value="ECO:0007669"/>
    <property type="project" value="TreeGrafter"/>
</dbReference>
<dbReference type="CDD" id="cd13912">
    <property type="entry name" value="CcO_II_C"/>
    <property type="match status" value="1"/>
</dbReference>
<dbReference type="FunFam" id="1.10.287.90:FF:000001">
    <property type="entry name" value="Cytochrome c oxidase subunit 2"/>
    <property type="match status" value="1"/>
</dbReference>
<dbReference type="FunFam" id="2.60.40.420:FF:000001">
    <property type="entry name" value="Cytochrome c oxidase subunit 2"/>
    <property type="match status" value="1"/>
</dbReference>
<dbReference type="Gene3D" id="1.10.287.90">
    <property type="match status" value="1"/>
</dbReference>
<dbReference type="Gene3D" id="2.60.40.420">
    <property type="entry name" value="Cupredoxins - blue copper proteins"/>
    <property type="match status" value="1"/>
</dbReference>
<dbReference type="InterPro" id="IPR045187">
    <property type="entry name" value="CcO_II"/>
</dbReference>
<dbReference type="InterPro" id="IPR002429">
    <property type="entry name" value="CcO_II-like_C"/>
</dbReference>
<dbReference type="InterPro" id="IPR034210">
    <property type="entry name" value="CcO_II_C"/>
</dbReference>
<dbReference type="InterPro" id="IPR001505">
    <property type="entry name" value="Copper_CuA"/>
</dbReference>
<dbReference type="InterPro" id="IPR008972">
    <property type="entry name" value="Cupredoxin"/>
</dbReference>
<dbReference type="InterPro" id="IPR014222">
    <property type="entry name" value="Cyt_c_oxidase_su2"/>
</dbReference>
<dbReference type="InterPro" id="IPR011759">
    <property type="entry name" value="Cyt_c_oxidase_su2_TM_dom"/>
</dbReference>
<dbReference type="InterPro" id="IPR036257">
    <property type="entry name" value="Cyt_c_oxidase_su2_TM_sf"/>
</dbReference>
<dbReference type="NCBIfam" id="TIGR02866">
    <property type="entry name" value="CoxB"/>
    <property type="match status" value="1"/>
</dbReference>
<dbReference type="PANTHER" id="PTHR22888:SF9">
    <property type="entry name" value="CYTOCHROME C OXIDASE SUBUNIT 2"/>
    <property type="match status" value="1"/>
</dbReference>
<dbReference type="PANTHER" id="PTHR22888">
    <property type="entry name" value="CYTOCHROME C OXIDASE, SUBUNIT II"/>
    <property type="match status" value="1"/>
</dbReference>
<dbReference type="Pfam" id="PF00116">
    <property type="entry name" value="COX2"/>
    <property type="match status" value="1"/>
</dbReference>
<dbReference type="Pfam" id="PF02790">
    <property type="entry name" value="COX2_TM"/>
    <property type="match status" value="1"/>
</dbReference>
<dbReference type="PRINTS" id="PR01166">
    <property type="entry name" value="CYCOXIDASEII"/>
</dbReference>
<dbReference type="SUPFAM" id="SSF49503">
    <property type="entry name" value="Cupredoxins"/>
    <property type="match status" value="1"/>
</dbReference>
<dbReference type="SUPFAM" id="SSF81464">
    <property type="entry name" value="Cytochrome c oxidase subunit II-like, transmembrane region"/>
    <property type="match status" value="1"/>
</dbReference>
<dbReference type="PROSITE" id="PS00078">
    <property type="entry name" value="COX2"/>
    <property type="match status" value="1"/>
</dbReference>
<dbReference type="PROSITE" id="PS50857">
    <property type="entry name" value="COX2_CUA"/>
    <property type="match status" value="1"/>
</dbReference>
<dbReference type="PROSITE" id="PS50999">
    <property type="entry name" value="COX2_TM"/>
    <property type="match status" value="1"/>
</dbReference>
<comment type="function">
    <text evidence="3">Component of the cytochrome c oxidase, the last enzyme in the mitochondrial electron transport chain which drives oxidative phosphorylation. The respiratory chain contains 3 multisubunit complexes succinate dehydrogenase (complex II, CII), ubiquinol-cytochrome c oxidoreductase (cytochrome b-c1 complex, complex III, CIII) and cytochrome c oxidase (complex IV, CIV), that cooperate to transfer electrons derived from NADH and succinate to molecular oxygen, creating an electrochemical gradient over the inner membrane that drives transmembrane transport and the ATP synthase. Cytochrome c oxidase is the component of the respiratory chain that catalyzes the reduction of oxygen to water. Electrons originating from reduced cytochrome c in the intermembrane space (IMS) are transferred via the dinuclear copper A center (CU(A)) of subunit 2 and heme A of subunit 1 to the active site in subunit 1, a binuclear center (BNC) formed by heme A3 and copper B (CU(B)). The BNC reduces molecular oxygen to 2 water molecules using 4 electrons from cytochrome c in the IMS and 4 protons from the mitochondrial matrix.</text>
</comment>
<comment type="catalytic activity">
    <reaction evidence="3">
        <text>4 Fe(II)-[cytochrome c] + O2 + 8 H(+)(in) = 4 Fe(III)-[cytochrome c] + 2 H2O + 4 H(+)(out)</text>
        <dbReference type="Rhea" id="RHEA:11436"/>
        <dbReference type="Rhea" id="RHEA-COMP:10350"/>
        <dbReference type="Rhea" id="RHEA-COMP:14399"/>
        <dbReference type="ChEBI" id="CHEBI:15377"/>
        <dbReference type="ChEBI" id="CHEBI:15378"/>
        <dbReference type="ChEBI" id="CHEBI:15379"/>
        <dbReference type="ChEBI" id="CHEBI:29033"/>
        <dbReference type="ChEBI" id="CHEBI:29034"/>
        <dbReference type="EC" id="7.1.1.9"/>
    </reaction>
    <physiologicalReaction direction="left-to-right" evidence="3">
        <dbReference type="Rhea" id="RHEA:11437"/>
    </physiologicalReaction>
</comment>
<comment type="cofactor">
    <cofactor evidence="4">
        <name>Cu cation</name>
        <dbReference type="ChEBI" id="CHEBI:23378"/>
    </cofactor>
    <text evidence="4">Binds a dinuclear copper A center per subunit.</text>
</comment>
<comment type="subunit">
    <text evidence="1 4">Component of the cytochrome c oxidase (complex IV, CIV), a multisubunit enzyme composed of 14 subunits. The complex is composed of a catalytic core of 3 subunits MT-CO1, MT-CO2 and MT-CO3, encoded in the mitochondrial DNA, and 11 supernumerary subunits COX4I, COX5A, COX5B, COX6A, COX6B, COX6C, COX7A, COX7B, COX7C, COX8 and NDUFA4, which are encoded in the nuclear genome. The complex exists as a monomer or a dimer and forms supercomplexes (SCs) in the inner mitochondrial membrane with NADH-ubiquinone oxidoreductase (complex I, CI) and ubiquinol-cytochrome c oxidoreductase (cytochrome b-c1 complex, complex III, CIII), resulting in different assemblies (supercomplex SCI(1)III(2)IV(1) and megacomplex MCI(2)III(2)IV(2)) (By similarity). Found in a complex with TMEM177, COA6, COX18, COX20, SCO1 and SCO2. Interacts with TMEM177 in a COX20-dependent manner. Interacts with COX20. Interacts with COX16 (By similarity).</text>
</comment>
<comment type="subcellular location">
    <subcellularLocation>
        <location evidence="4">Mitochondrion inner membrane</location>
        <topology evidence="4">Multi-pass membrane protein</topology>
    </subcellularLocation>
</comment>
<comment type="similarity">
    <text evidence="5">Belongs to the cytochrome c oxidase subunit 2 family.</text>
</comment>